<comment type="function">
    <text evidence="1">Catalyzes the formation of 5-methyl-uridine at position 54 (m5U54) in all tRNA. May also have a role in tRNA stabilization or maturation (By similarity).</text>
</comment>
<comment type="catalytic activity">
    <reaction>
        <text>uridine(54) in tRNA + S-adenosyl-L-methionine = 5-methyluridine(54) in tRNA + S-adenosyl-L-homocysteine + H(+)</text>
        <dbReference type="Rhea" id="RHEA:42712"/>
        <dbReference type="Rhea" id="RHEA-COMP:10167"/>
        <dbReference type="Rhea" id="RHEA-COMP:10193"/>
        <dbReference type="ChEBI" id="CHEBI:15378"/>
        <dbReference type="ChEBI" id="CHEBI:57856"/>
        <dbReference type="ChEBI" id="CHEBI:59789"/>
        <dbReference type="ChEBI" id="CHEBI:65315"/>
        <dbReference type="ChEBI" id="CHEBI:74447"/>
        <dbReference type="EC" id="2.1.1.35"/>
    </reaction>
</comment>
<comment type="similarity">
    <text evidence="3">Belongs to the class I-like SAM-binding methyltransferase superfamily. RNA M5U methyltransferase family.</text>
</comment>
<proteinExistence type="inferred from homology"/>
<feature type="chain" id="PRO_0000162060" description="tRNA (uracil(54)-C(5))-methyltransferase">
    <location>
        <begin position="1"/>
        <end position="527"/>
    </location>
</feature>
<feature type="domain" description="TRAM" evidence="2">
    <location>
        <begin position="107"/>
        <end position="167"/>
    </location>
</feature>
<feature type="active site" description="Nucleophile" evidence="3">
    <location>
        <position position="478"/>
    </location>
</feature>
<feature type="active site" description="Proton acceptor" evidence="4">
    <location>
        <position position="517"/>
    </location>
</feature>
<feature type="binding site" evidence="1">
    <location>
        <position position="182"/>
    </location>
    <ligand>
        <name>[4Fe-4S] cluster</name>
        <dbReference type="ChEBI" id="CHEBI:49883"/>
    </ligand>
</feature>
<feature type="binding site" evidence="1">
    <location>
        <position position="188"/>
    </location>
    <ligand>
        <name>[4Fe-4S] cluster</name>
        <dbReference type="ChEBI" id="CHEBI:49883"/>
    </ligand>
</feature>
<feature type="binding site" evidence="1">
    <location>
        <position position="191"/>
    </location>
    <ligand>
        <name>[4Fe-4S] cluster</name>
        <dbReference type="ChEBI" id="CHEBI:49883"/>
    </ligand>
</feature>
<feature type="binding site" evidence="1">
    <location>
        <position position="276"/>
    </location>
    <ligand>
        <name>[4Fe-4S] cluster</name>
        <dbReference type="ChEBI" id="CHEBI:49883"/>
    </ligand>
</feature>
<feature type="binding site" evidence="3">
    <location>
        <position position="347"/>
    </location>
    <ligand>
        <name>S-adenosyl-L-methionine</name>
        <dbReference type="ChEBI" id="CHEBI:59789"/>
    </ligand>
</feature>
<feature type="binding site" evidence="3">
    <location>
        <position position="383"/>
    </location>
    <ligand>
        <name>S-adenosyl-L-methionine</name>
        <dbReference type="ChEBI" id="CHEBI:59789"/>
    </ligand>
</feature>
<feature type="binding site" evidence="3">
    <location>
        <position position="404"/>
    </location>
    <ligand>
        <name>S-adenosyl-L-methionine</name>
        <dbReference type="ChEBI" id="CHEBI:59789"/>
    </ligand>
</feature>
<feature type="binding site" evidence="3">
    <location>
        <position position="451"/>
    </location>
    <ligand>
        <name>S-adenosyl-L-methionine</name>
        <dbReference type="ChEBI" id="CHEBI:59789"/>
    </ligand>
</feature>
<gene>
    <name type="ORF">SPAC4G8.07c</name>
</gene>
<name>YAD7_SCHPO</name>
<organism>
    <name type="scientific">Schizosaccharomyces pombe (strain 972 / ATCC 24843)</name>
    <name type="common">Fission yeast</name>
    <dbReference type="NCBI Taxonomy" id="284812"/>
    <lineage>
        <taxon>Eukaryota</taxon>
        <taxon>Fungi</taxon>
        <taxon>Dikarya</taxon>
        <taxon>Ascomycota</taxon>
        <taxon>Taphrinomycotina</taxon>
        <taxon>Schizosaccharomycetes</taxon>
        <taxon>Schizosaccharomycetales</taxon>
        <taxon>Schizosaccharomycetaceae</taxon>
        <taxon>Schizosaccharomyces</taxon>
    </lineage>
</organism>
<reference key="1">
    <citation type="journal article" date="2002" name="Nature">
        <title>The genome sequence of Schizosaccharomyces pombe.</title>
        <authorList>
            <person name="Wood V."/>
            <person name="Gwilliam R."/>
            <person name="Rajandream M.A."/>
            <person name="Lyne M.H."/>
            <person name="Lyne R."/>
            <person name="Stewart A."/>
            <person name="Sgouros J.G."/>
            <person name="Peat N."/>
            <person name="Hayles J."/>
            <person name="Baker S.G."/>
            <person name="Basham D."/>
            <person name="Bowman S."/>
            <person name="Brooks K."/>
            <person name="Brown D."/>
            <person name="Brown S."/>
            <person name="Chillingworth T."/>
            <person name="Churcher C.M."/>
            <person name="Collins M."/>
            <person name="Connor R."/>
            <person name="Cronin A."/>
            <person name="Davis P."/>
            <person name="Feltwell T."/>
            <person name="Fraser A."/>
            <person name="Gentles S."/>
            <person name="Goble A."/>
            <person name="Hamlin N."/>
            <person name="Harris D.E."/>
            <person name="Hidalgo J."/>
            <person name="Hodgson G."/>
            <person name="Holroyd S."/>
            <person name="Hornsby T."/>
            <person name="Howarth S."/>
            <person name="Huckle E.J."/>
            <person name="Hunt S."/>
            <person name="Jagels K."/>
            <person name="James K.D."/>
            <person name="Jones L."/>
            <person name="Jones M."/>
            <person name="Leather S."/>
            <person name="McDonald S."/>
            <person name="McLean J."/>
            <person name="Mooney P."/>
            <person name="Moule S."/>
            <person name="Mungall K.L."/>
            <person name="Murphy L.D."/>
            <person name="Niblett D."/>
            <person name="Odell C."/>
            <person name="Oliver K."/>
            <person name="O'Neil S."/>
            <person name="Pearson D."/>
            <person name="Quail M.A."/>
            <person name="Rabbinowitsch E."/>
            <person name="Rutherford K.M."/>
            <person name="Rutter S."/>
            <person name="Saunders D."/>
            <person name="Seeger K."/>
            <person name="Sharp S."/>
            <person name="Skelton J."/>
            <person name="Simmonds M.N."/>
            <person name="Squares R."/>
            <person name="Squares S."/>
            <person name="Stevens K."/>
            <person name="Taylor K."/>
            <person name="Taylor R.G."/>
            <person name="Tivey A."/>
            <person name="Walsh S.V."/>
            <person name="Warren T."/>
            <person name="Whitehead S."/>
            <person name="Woodward J.R."/>
            <person name="Volckaert G."/>
            <person name="Aert R."/>
            <person name="Robben J."/>
            <person name="Grymonprez B."/>
            <person name="Weltjens I."/>
            <person name="Vanstreels E."/>
            <person name="Rieger M."/>
            <person name="Schaefer M."/>
            <person name="Mueller-Auer S."/>
            <person name="Gabel C."/>
            <person name="Fuchs M."/>
            <person name="Duesterhoeft A."/>
            <person name="Fritzc C."/>
            <person name="Holzer E."/>
            <person name="Moestl D."/>
            <person name="Hilbert H."/>
            <person name="Borzym K."/>
            <person name="Langer I."/>
            <person name="Beck A."/>
            <person name="Lehrach H."/>
            <person name="Reinhardt R."/>
            <person name="Pohl T.M."/>
            <person name="Eger P."/>
            <person name="Zimmermann W."/>
            <person name="Wedler H."/>
            <person name="Wambutt R."/>
            <person name="Purnelle B."/>
            <person name="Goffeau A."/>
            <person name="Cadieu E."/>
            <person name="Dreano S."/>
            <person name="Gloux S."/>
            <person name="Lelaure V."/>
            <person name="Mottier S."/>
            <person name="Galibert F."/>
            <person name="Aves S.J."/>
            <person name="Xiang Z."/>
            <person name="Hunt C."/>
            <person name="Moore K."/>
            <person name="Hurst S.M."/>
            <person name="Lucas M."/>
            <person name="Rochet M."/>
            <person name="Gaillardin C."/>
            <person name="Tallada V.A."/>
            <person name="Garzon A."/>
            <person name="Thode G."/>
            <person name="Daga R.R."/>
            <person name="Cruzado L."/>
            <person name="Jimenez J."/>
            <person name="Sanchez M."/>
            <person name="del Rey F."/>
            <person name="Benito J."/>
            <person name="Dominguez A."/>
            <person name="Revuelta J.L."/>
            <person name="Moreno S."/>
            <person name="Armstrong J."/>
            <person name="Forsburg S.L."/>
            <person name="Cerutti L."/>
            <person name="Lowe T."/>
            <person name="McCombie W.R."/>
            <person name="Paulsen I."/>
            <person name="Potashkin J."/>
            <person name="Shpakovski G.V."/>
            <person name="Ussery D."/>
            <person name="Barrell B.G."/>
            <person name="Nurse P."/>
        </authorList>
    </citation>
    <scope>NUCLEOTIDE SEQUENCE [LARGE SCALE GENOMIC DNA]</scope>
    <source>
        <strain>972 / ATCC 24843</strain>
    </source>
</reference>
<sequence length="527" mass="59614">MYPYCLKYLTNGLRSKQMINFLCIQNILSARTLKICRFRFLPTPSHPTHKMAQETRAISSISEAANKRARKLSKRRAKKPVEEGSSGHVLLLEIENLIEKPVLANVPFERFQEIEVKISYLSSSGDGIGLVCNDQYAVVVPFTLPGDIVKAKLHFLADTYALADFLEVISPSEDRDDTLIKCPYFAKCGGCQYQMLSYDKQLLQKKRVVEKAFQYYSKLDSSLLPAIKDTVGSPLQYNYRTKITPHFDVPKGGTKGPLIIGFQEKGRRRVMDIEECPIATKTINEEYPKIIEDVQSRANTFKRGATILMRDSATEDGKHCVITDHKMIVREQFGDLSFTFPAGAFFQNNNSILEKFTSYVREQLLNPFGRKEHQRPKYFVDAYCGSGLFSVACSKGFLSVIGVEISADSVRYAEENAKRNNVSNATFIVGQAEKIFSSIETPPNETAMVIDPPRKGCDQSFLNQLLEYSPYRIVYISCNVHTQARDVGFLLSQEKGRSYKIDEIRGFDLFPQSHHVESILTLTKVVS</sequence>
<protein>
    <recommendedName>
        <fullName>tRNA (uracil(54)-C(5))-methyltransferase</fullName>
        <ecNumber>2.1.1.35</ecNumber>
    </recommendedName>
</protein>
<dbReference type="EC" id="2.1.1.35"/>
<dbReference type="EMBL" id="CU329670">
    <property type="protein sequence ID" value="CAA91208.1"/>
    <property type="molecule type" value="Genomic_DNA"/>
</dbReference>
<dbReference type="PIR" id="T38852">
    <property type="entry name" value="S62484"/>
</dbReference>
<dbReference type="RefSeq" id="NP_593067.1">
    <property type="nucleotide sequence ID" value="NM_001018465.2"/>
</dbReference>
<dbReference type="SMR" id="Q09833"/>
<dbReference type="BioGRID" id="279952">
    <property type="interactions" value="1"/>
</dbReference>
<dbReference type="FunCoup" id="Q09833">
    <property type="interactions" value="116"/>
</dbReference>
<dbReference type="STRING" id="284812.Q09833"/>
<dbReference type="PaxDb" id="4896-SPAC4G8.07c.1"/>
<dbReference type="EnsemblFungi" id="SPAC4G8.07c.1">
    <property type="protein sequence ID" value="SPAC4G8.07c.1:pep"/>
    <property type="gene ID" value="SPAC4G8.07c"/>
</dbReference>
<dbReference type="KEGG" id="spo:2543535"/>
<dbReference type="PomBase" id="SPAC4G8.07c"/>
<dbReference type="VEuPathDB" id="FungiDB:SPAC4G8.07c"/>
<dbReference type="eggNOG" id="KOG2187">
    <property type="taxonomic scope" value="Eukaryota"/>
</dbReference>
<dbReference type="HOGENOM" id="CLU_014689_3_1_1"/>
<dbReference type="InParanoid" id="Q09833"/>
<dbReference type="OMA" id="GGCKWQH"/>
<dbReference type="PhylomeDB" id="Q09833"/>
<dbReference type="PRO" id="PR:Q09833"/>
<dbReference type="Proteomes" id="UP000002485">
    <property type="component" value="Chromosome I"/>
</dbReference>
<dbReference type="GO" id="GO:0005739">
    <property type="term" value="C:mitochondrion"/>
    <property type="evidence" value="ECO:0007005"/>
    <property type="project" value="PomBase"/>
</dbReference>
<dbReference type="GO" id="GO:0005634">
    <property type="term" value="C:nucleus"/>
    <property type="evidence" value="ECO:0007005"/>
    <property type="project" value="PomBase"/>
</dbReference>
<dbReference type="GO" id="GO:0051539">
    <property type="term" value="F:4 iron, 4 sulfur cluster binding"/>
    <property type="evidence" value="ECO:0007669"/>
    <property type="project" value="UniProtKB-KW"/>
</dbReference>
<dbReference type="GO" id="GO:0046872">
    <property type="term" value="F:metal ion binding"/>
    <property type="evidence" value="ECO:0007669"/>
    <property type="project" value="UniProtKB-KW"/>
</dbReference>
<dbReference type="GO" id="GO:0030697">
    <property type="term" value="F:tRNA (uracil(54)-C5)-methyltransferase activity, S-adenosyl methionine-dependent"/>
    <property type="evidence" value="ECO:0007669"/>
    <property type="project" value="UniProtKB-EC"/>
</dbReference>
<dbReference type="GO" id="GO:0030488">
    <property type="term" value="P:tRNA methylation"/>
    <property type="evidence" value="ECO:0000250"/>
    <property type="project" value="PomBase"/>
</dbReference>
<dbReference type="CDD" id="cd02440">
    <property type="entry name" value="AdoMet_MTases"/>
    <property type="match status" value="1"/>
</dbReference>
<dbReference type="FunFam" id="2.40.50.140:FF:000201">
    <property type="entry name" value="TRM2p tRNA methyltransferase"/>
    <property type="match status" value="1"/>
</dbReference>
<dbReference type="FunFam" id="3.40.50.150:FF:000174">
    <property type="entry name" value="TRM2p tRNA methyltransferase"/>
    <property type="match status" value="1"/>
</dbReference>
<dbReference type="Gene3D" id="2.40.50.140">
    <property type="entry name" value="Nucleic acid-binding proteins"/>
    <property type="match status" value="1"/>
</dbReference>
<dbReference type="Gene3D" id="3.40.50.150">
    <property type="entry name" value="Vaccinia Virus protein VP39"/>
    <property type="match status" value="2"/>
</dbReference>
<dbReference type="InterPro" id="IPR030390">
    <property type="entry name" value="MeTrfase_TrmA_AS"/>
</dbReference>
<dbReference type="InterPro" id="IPR030391">
    <property type="entry name" value="MeTrfase_TrmA_CS"/>
</dbReference>
<dbReference type="InterPro" id="IPR012340">
    <property type="entry name" value="NA-bd_OB-fold"/>
</dbReference>
<dbReference type="InterPro" id="IPR029063">
    <property type="entry name" value="SAM-dependent_MTases_sf"/>
</dbReference>
<dbReference type="InterPro" id="IPR002792">
    <property type="entry name" value="TRAM_dom"/>
</dbReference>
<dbReference type="InterPro" id="IPR025795">
    <property type="entry name" value="tRNA_(uracil-5-)_MeTrfase"/>
</dbReference>
<dbReference type="InterPro" id="IPR010280">
    <property type="entry name" value="U5_MeTrfase_fam"/>
</dbReference>
<dbReference type="PANTHER" id="PTHR11061">
    <property type="entry name" value="RNA M5U METHYLTRANSFERASE"/>
    <property type="match status" value="1"/>
</dbReference>
<dbReference type="PANTHER" id="PTHR11061:SF30">
    <property type="entry name" value="TRNA (URACIL(54)-C(5))-METHYLTRANSFERASE"/>
    <property type="match status" value="1"/>
</dbReference>
<dbReference type="Pfam" id="PF01938">
    <property type="entry name" value="TRAM"/>
    <property type="match status" value="1"/>
</dbReference>
<dbReference type="Pfam" id="PF05958">
    <property type="entry name" value="tRNA_U5-meth_tr"/>
    <property type="match status" value="1"/>
</dbReference>
<dbReference type="SUPFAM" id="SSF50249">
    <property type="entry name" value="Nucleic acid-binding proteins"/>
    <property type="match status" value="1"/>
</dbReference>
<dbReference type="SUPFAM" id="SSF53335">
    <property type="entry name" value="S-adenosyl-L-methionine-dependent methyltransferases"/>
    <property type="match status" value="1"/>
</dbReference>
<dbReference type="PROSITE" id="PS51687">
    <property type="entry name" value="SAM_MT_RNA_M5U"/>
    <property type="match status" value="1"/>
</dbReference>
<dbReference type="PROSITE" id="PS51622">
    <property type="entry name" value="SAM_MT_RNA_M5U_2"/>
    <property type="match status" value="1"/>
</dbReference>
<dbReference type="PROSITE" id="PS50926">
    <property type="entry name" value="TRAM"/>
    <property type="match status" value="1"/>
</dbReference>
<dbReference type="PROSITE" id="PS01230">
    <property type="entry name" value="TRMA_1"/>
    <property type="match status" value="1"/>
</dbReference>
<dbReference type="PROSITE" id="PS01231">
    <property type="entry name" value="TRMA_2"/>
    <property type="match status" value="1"/>
</dbReference>
<evidence type="ECO:0000250" key="1"/>
<evidence type="ECO:0000255" key="2">
    <source>
        <dbReference type="PROSITE-ProRule" id="PRU00208"/>
    </source>
</evidence>
<evidence type="ECO:0000255" key="3">
    <source>
        <dbReference type="PROSITE-ProRule" id="PRU01024"/>
    </source>
</evidence>
<evidence type="ECO:0000255" key="4">
    <source>
        <dbReference type="PROSITE-ProRule" id="PRU10015"/>
    </source>
</evidence>
<keyword id="KW-0004">4Fe-4S</keyword>
<keyword id="KW-0408">Iron</keyword>
<keyword id="KW-0411">Iron-sulfur</keyword>
<keyword id="KW-0479">Metal-binding</keyword>
<keyword id="KW-0489">Methyltransferase</keyword>
<keyword id="KW-1185">Reference proteome</keyword>
<keyword id="KW-0949">S-adenosyl-L-methionine</keyword>
<keyword id="KW-0808">Transferase</keyword>
<keyword id="KW-0819">tRNA processing</keyword>
<accession>Q09833</accession>